<keyword id="KW-0143">Chaperone</keyword>
<keyword id="KW-0574">Periplasm</keyword>
<keyword id="KW-0653">Protein transport</keyword>
<keyword id="KW-1185">Reference proteome</keyword>
<keyword id="KW-0732">Signal</keyword>
<keyword id="KW-0813">Transport</keyword>
<organism>
    <name type="scientific">Campylobacter jejuni subsp. jejuni serotype O:2 (strain ATCC 700819 / NCTC 11168)</name>
    <dbReference type="NCBI Taxonomy" id="192222"/>
    <lineage>
        <taxon>Bacteria</taxon>
        <taxon>Pseudomonadati</taxon>
        <taxon>Campylobacterota</taxon>
        <taxon>Epsilonproteobacteria</taxon>
        <taxon>Campylobacterales</taxon>
        <taxon>Campylobacteraceae</taxon>
        <taxon>Campylobacter</taxon>
    </lineage>
</organism>
<protein>
    <recommendedName>
        <fullName>Outer-membrane lipoprotein carrier protein</fullName>
    </recommendedName>
</protein>
<accession>Q9PNZ0</accession>
<accession>Q0P9V6</accession>
<reference key="1">
    <citation type="journal article" date="2000" name="Nature">
        <title>The genome sequence of the food-borne pathogen Campylobacter jejuni reveals hypervariable sequences.</title>
        <authorList>
            <person name="Parkhill J."/>
            <person name="Wren B.W."/>
            <person name="Mungall K.L."/>
            <person name="Ketley J.M."/>
            <person name="Churcher C.M."/>
            <person name="Basham D."/>
            <person name="Chillingworth T."/>
            <person name="Davies R.M."/>
            <person name="Feltwell T."/>
            <person name="Holroyd S."/>
            <person name="Jagels K."/>
            <person name="Karlyshev A.V."/>
            <person name="Moule S."/>
            <person name="Pallen M.J."/>
            <person name="Penn C.W."/>
            <person name="Quail M.A."/>
            <person name="Rajandream M.A."/>
            <person name="Rutherford K.M."/>
            <person name="van Vliet A.H.M."/>
            <person name="Whitehead S."/>
            <person name="Barrell B.G."/>
        </authorList>
    </citation>
    <scope>NUCLEOTIDE SEQUENCE [LARGE SCALE GENOMIC DNA]</scope>
    <source>
        <strain>ATCC 700819 / NCTC 11168</strain>
    </source>
</reference>
<feature type="signal peptide" evidence="2">
    <location>
        <begin position="1"/>
        <end position="17"/>
    </location>
</feature>
<feature type="chain" id="PRO_0000018252" description="Outer-membrane lipoprotein carrier protein">
    <location>
        <begin position="18"/>
        <end position="169"/>
    </location>
</feature>
<name>LOLA_CAMJE</name>
<dbReference type="EMBL" id="AL111168">
    <property type="protein sequence ID" value="CAL35063.1"/>
    <property type="molecule type" value="Genomic_DNA"/>
</dbReference>
<dbReference type="PIR" id="F81368">
    <property type="entry name" value="F81368"/>
</dbReference>
<dbReference type="RefSeq" id="WP_002853302.1">
    <property type="nucleotide sequence ID" value="NZ_SZUC01000001.1"/>
</dbReference>
<dbReference type="RefSeq" id="YP_002344341.1">
    <property type="nucleotide sequence ID" value="NC_002163.1"/>
</dbReference>
<dbReference type="SMR" id="Q9PNZ0"/>
<dbReference type="IntAct" id="Q9PNZ0">
    <property type="interactions" value="8"/>
</dbReference>
<dbReference type="STRING" id="192222.Cj0943"/>
<dbReference type="PaxDb" id="192222-Cj0943"/>
<dbReference type="EnsemblBacteria" id="CAL35063">
    <property type="protein sequence ID" value="CAL35063"/>
    <property type="gene ID" value="Cj0943"/>
</dbReference>
<dbReference type="GeneID" id="905238"/>
<dbReference type="KEGG" id="cje:Cj0943"/>
<dbReference type="PATRIC" id="fig|192222.6.peg.927"/>
<dbReference type="eggNOG" id="COG2834">
    <property type="taxonomic scope" value="Bacteria"/>
</dbReference>
<dbReference type="HOGENOM" id="CLU_125914_0_0_7"/>
<dbReference type="OrthoDB" id="5339202at2"/>
<dbReference type="Proteomes" id="UP000000799">
    <property type="component" value="Chromosome"/>
</dbReference>
<dbReference type="GO" id="GO:0042597">
    <property type="term" value="C:periplasmic space"/>
    <property type="evidence" value="ECO:0007669"/>
    <property type="project" value="UniProtKB-SubCell"/>
</dbReference>
<dbReference type="GO" id="GO:0015031">
    <property type="term" value="P:protein transport"/>
    <property type="evidence" value="ECO:0007669"/>
    <property type="project" value="UniProtKB-KW"/>
</dbReference>
<dbReference type="CDD" id="cd16325">
    <property type="entry name" value="LolA"/>
    <property type="match status" value="1"/>
</dbReference>
<dbReference type="Gene3D" id="2.50.20.10">
    <property type="entry name" value="Lipoprotein localisation LolA/LolB/LppX"/>
    <property type="match status" value="1"/>
</dbReference>
<dbReference type="InterPro" id="IPR029046">
    <property type="entry name" value="LolA/LolB/LppX"/>
</dbReference>
<dbReference type="InterPro" id="IPR004564">
    <property type="entry name" value="OM_lipoprot_carrier_LolA-like"/>
</dbReference>
<dbReference type="NCBIfam" id="NF000663">
    <property type="entry name" value="PRK00031.2-1"/>
    <property type="match status" value="1"/>
</dbReference>
<dbReference type="NCBIfam" id="NF000665">
    <property type="entry name" value="PRK00031.2-3"/>
    <property type="match status" value="1"/>
</dbReference>
<dbReference type="NCBIfam" id="NF000666">
    <property type="entry name" value="PRK00031.2-4"/>
    <property type="match status" value="1"/>
</dbReference>
<dbReference type="PANTHER" id="PTHR35869">
    <property type="entry name" value="OUTER-MEMBRANE LIPOPROTEIN CARRIER PROTEIN"/>
    <property type="match status" value="1"/>
</dbReference>
<dbReference type="PANTHER" id="PTHR35869:SF1">
    <property type="entry name" value="OUTER-MEMBRANE LIPOPROTEIN CARRIER PROTEIN"/>
    <property type="match status" value="1"/>
</dbReference>
<dbReference type="Pfam" id="PF03548">
    <property type="entry name" value="LolA"/>
    <property type="match status" value="1"/>
</dbReference>
<dbReference type="SUPFAM" id="SSF89392">
    <property type="entry name" value="Prokaryotic lipoproteins and lipoprotein localization factors"/>
    <property type="match status" value="1"/>
</dbReference>
<comment type="function">
    <text evidence="1">Participates in the translocation of lipoproteins from the inner membrane to the outer membrane. Only forms a complex with a lipoprotein if the residue after the N-terminal Cys is not an aspartate (The Asp acts as a targeting signal to indicate that the lipoprotein should stay in the inner membrane) (By similarity).</text>
</comment>
<comment type="subunit">
    <text evidence="1">Monomer.</text>
</comment>
<comment type="subcellular location">
    <subcellularLocation>
        <location evidence="1">Periplasm</location>
    </subcellularLocation>
</comment>
<comment type="similarity">
    <text evidence="3">Belongs to the LolA family.</text>
</comment>
<evidence type="ECO:0000250" key="1"/>
<evidence type="ECO:0000255" key="2"/>
<evidence type="ECO:0000305" key="3"/>
<gene>
    <name type="primary">lolA</name>
    <name type="ordered locus">Cj0943</name>
</gene>
<sequence length="169" mass="19830">MKKTFLIFFIFIGQLFALDLNFNTFSSNFTQIVKSKNSTLSYSGHFILSKDQAYWSYDTPSKKEIYINKNQVTIVEHDLEQVIFSHLDNIPNLNEIFKKASLIDKDKLVAKYDNINYTIKLNQEQIQSISYKDEFENDVIINLNNQIKNPKINSDVFKAKIPQNYDIVR</sequence>
<proteinExistence type="inferred from homology"/>